<gene>
    <name evidence="1" type="primary">purM</name>
    <name type="ordered locus">Mfla_0205</name>
</gene>
<proteinExistence type="inferred from homology"/>
<name>PUR5_METFK</name>
<keyword id="KW-0067">ATP-binding</keyword>
<keyword id="KW-0963">Cytoplasm</keyword>
<keyword id="KW-0436">Ligase</keyword>
<keyword id="KW-0547">Nucleotide-binding</keyword>
<keyword id="KW-0658">Purine biosynthesis</keyword>
<keyword id="KW-1185">Reference proteome</keyword>
<accession>Q1H4W1</accession>
<reference key="1">
    <citation type="submission" date="2006-03" db="EMBL/GenBank/DDBJ databases">
        <title>Complete sequence of Methylobacillus flagellatus KT.</title>
        <authorList>
            <consortium name="US DOE Joint Genome Institute"/>
            <person name="Copeland A."/>
            <person name="Lucas S."/>
            <person name="Lapidus A."/>
            <person name="Barry K."/>
            <person name="Detter J.C."/>
            <person name="Glavina del Rio T."/>
            <person name="Hammon N."/>
            <person name="Israni S."/>
            <person name="Dalin E."/>
            <person name="Tice H."/>
            <person name="Pitluck S."/>
            <person name="Brettin T."/>
            <person name="Bruce D."/>
            <person name="Han C."/>
            <person name="Tapia R."/>
            <person name="Saunders E."/>
            <person name="Gilna P."/>
            <person name="Schmutz J."/>
            <person name="Larimer F."/>
            <person name="Land M."/>
            <person name="Kyrpides N."/>
            <person name="Anderson I."/>
            <person name="Richardson P."/>
        </authorList>
    </citation>
    <scope>NUCLEOTIDE SEQUENCE [LARGE SCALE GENOMIC DNA]</scope>
    <source>
        <strain>ATCC 51484 / DSM 6875 / VKM B-1610 / KT</strain>
    </source>
</reference>
<dbReference type="EC" id="6.3.3.1" evidence="1"/>
<dbReference type="EMBL" id="CP000284">
    <property type="protein sequence ID" value="ABE48476.1"/>
    <property type="molecule type" value="Genomic_DNA"/>
</dbReference>
<dbReference type="RefSeq" id="WP_011478573.1">
    <property type="nucleotide sequence ID" value="NC_007947.1"/>
</dbReference>
<dbReference type="SMR" id="Q1H4W1"/>
<dbReference type="STRING" id="265072.Mfla_0205"/>
<dbReference type="KEGG" id="mfa:Mfla_0205"/>
<dbReference type="eggNOG" id="COG0150">
    <property type="taxonomic scope" value="Bacteria"/>
</dbReference>
<dbReference type="HOGENOM" id="CLU_047116_0_0_4"/>
<dbReference type="OrthoDB" id="9777881at2"/>
<dbReference type="UniPathway" id="UPA00074">
    <property type="reaction ID" value="UER00129"/>
</dbReference>
<dbReference type="Proteomes" id="UP000002440">
    <property type="component" value="Chromosome"/>
</dbReference>
<dbReference type="GO" id="GO:0005829">
    <property type="term" value="C:cytosol"/>
    <property type="evidence" value="ECO:0007669"/>
    <property type="project" value="TreeGrafter"/>
</dbReference>
<dbReference type="GO" id="GO:0005524">
    <property type="term" value="F:ATP binding"/>
    <property type="evidence" value="ECO:0007669"/>
    <property type="project" value="UniProtKB-KW"/>
</dbReference>
<dbReference type="GO" id="GO:0004637">
    <property type="term" value="F:phosphoribosylamine-glycine ligase activity"/>
    <property type="evidence" value="ECO:0007669"/>
    <property type="project" value="TreeGrafter"/>
</dbReference>
<dbReference type="GO" id="GO:0004641">
    <property type="term" value="F:phosphoribosylformylglycinamidine cyclo-ligase activity"/>
    <property type="evidence" value="ECO:0007669"/>
    <property type="project" value="UniProtKB-UniRule"/>
</dbReference>
<dbReference type="GO" id="GO:0006189">
    <property type="term" value="P:'de novo' IMP biosynthetic process"/>
    <property type="evidence" value="ECO:0007669"/>
    <property type="project" value="UniProtKB-UniRule"/>
</dbReference>
<dbReference type="GO" id="GO:0046084">
    <property type="term" value="P:adenine biosynthetic process"/>
    <property type="evidence" value="ECO:0007669"/>
    <property type="project" value="TreeGrafter"/>
</dbReference>
<dbReference type="CDD" id="cd02196">
    <property type="entry name" value="PurM"/>
    <property type="match status" value="1"/>
</dbReference>
<dbReference type="FunFam" id="3.30.1330.10:FF:000001">
    <property type="entry name" value="Phosphoribosylformylglycinamidine cyclo-ligase"/>
    <property type="match status" value="1"/>
</dbReference>
<dbReference type="FunFam" id="3.90.650.10:FF:000001">
    <property type="entry name" value="Phosphoribosylformylglycinamidine cyclo-ligase"/>
    <property type="match status" value="1"/>
</dbReference>
<dbReference type="Gene3D" id="3.90.650.10">
    <property type="entry name" value="PurM-like C-terminal domain"/>
    <property type="match status" value="1"/>
</dbReference>
<dbReference type="Gene3D" id="3.30.1330.10">
    <property type="entry name" value="PurM-like, N-terminal domain"/>
    <property type="match status" value="1"/>
</dbReference>
<dbReference type="HAMAP" id="MF_00741">
    <property type="entry name" value="AIRS"/>
    <property type="match status" value="1"/>
</dbReference>
<dbReference type="InterPro" id="IPR010918">
    <property type="entry name" value="PurM-like_C_dom"/>
</dbReference>
<dbReference type="InterPro" id="IPR036676">
    <property type="entry name" value="PurM-like_C_sf"/>
</dbReference>
<dbReference type="InterPro" id="IPR016188">
    <property type="entry name" value="PurM-like_N"/>
</dbReference>
<dbReference type="InterPro" id="IPR036921">
    <property type="entry name" value="PurM-like_N_sf"/>
</dbReference>
<dbReference type="InterPro" id="IPR004733">
    <property type="entry name" value="PurM_cligase"/>
</dbReference>
<dbReference type="NCBIfam" id="TIGR00878">
    <property type="entry name" value="purM"/>
    <property type="match status" value="1"/>
</dbReference>
<dbReference type="PANTHER" id="PTHR10520:SF12">
    <property type="entry name" value="TRIFUNCTIONAL PURINE BIOSYNTHETIC PROTEIN ADENOSINE-3"/>
    <property type="match status" value="1"/>
</dbReference>
<dbReference type="PANTHER" id="PTHR10520">
    <property type="entry name" value="TRIFUNCTIONAL PURINE BIOSYNTHETIC PROTEIN ADENOSINE-3-RELATED"/>
    <property type="match status" value="1"/>
</dbReference>
<dbReference type="Pfam" id="PF00586">
    <property type="entry name" value="AIRS"/>
    <property type="match status" value="1"/>
</dbReference>
<dbReference type="Pfam" id="PF02769">
    <property type="entry name" value="AIRS_C"/>
    <property type="match status" value="1"/>
</dbReference>
<dbReference type="SUPFAM" id="SSF56042">
    <property type="entry name" value="PurM C-terminal domain-like"/>
    <property type="match status" value="1"/>
</dbReference>
<dbReference type="SUPFAM" id="SSF55326">
    <property type="entry name" value="PurM N-terminal domain-like"/>
    <property type="match status" value="1"/>
</dbReference>
<sequence>MNSEKNSISYRDAGVDIEAGDALVERIKPFAKRTMRPEVLGGIGGFGSLFEVPKKFKNPVLVSGTDGVGTKLKLAFQLNKHDTVGIDLVAMSVNDILVQGAEPLFFLDYFACGKLDVDTAAQVVQGIAAGCEQSGCALVGGETAEMPGMYPAGEYDLAGFVVGAADKDALIDGSTIAEGDVVLGLASNGAHSNGYSLVRKLIDLSGVDLESDFYGRPFRDVVMAPTRIYVKPILKLLQAIKVKGMAHITGGGITENVPRVLPEGLTAEVRQGSWEIPPLFSWLQEQGNITDQEMYRTFNCGIGMVVIVSAQDVAAAKALLSAEGEQVWEIGRIRAQGAGEAQTVVV</sequence>
<feature type="chain" id="PRO_0000258369" description="Phosphoribosylformylglycinamidine cyclo-ligase">
    <location>
        <begin position="1"/>
        <end position="346"/>
    </location>
</feature>
<protein>
    <recommendedName>
        <fullName evidence="1">Phosphoribosylformylglycinamidine cyclo-ligase</fullName>
        <ecNumber evidence="1">6.3.3.1</ecNumber>
    </recommendedName>
    <alternativeName>
        <fullName evidence="1">AIR synthase</fullName>
    </alternativeName>
    <alternativeName>
        <fullName evidence="1">AIRS</fullName>
    </alternativeName>
    <alternativeName>
        <fullName evidence="1">Phosphoribosyl-aminoimidazole synthetase</fullName>
    </alternativeName>
</protein>
<evidence type="ECO:0000255" key="1">
    <source>
        <dbReference type="HAMAP-Rule" id="MF_00741"/>
    </source>
</evidence>
<organism>
    <name type="scientific">Methylobacillus flagellatus (strain ATCC 51484 / DSM 6875 / VKM B-1610 / KT)</name>
    <dbReference type="NCBI Taxonomy" id="265072"/>
    <lineage>
        <taxon>Bacteria</taxon>
        <taxon>Pseudomonadati</taxon>
        <taxon>Pseudomonadota</taxon>
        <taxon>Betaproteobacteria</taxon>
        <taxon>Nitrosomonadales</taxon>
        <taxon>Methylophilaceae</taxon>
        <taxon>Methylobacillus</taxon>
    </lineage>
</organism>
<comment type="catalytic activity">
    <reaction evidence="1">
        <text>2-formamido-N(1)-(5-O-phospho-beta-D-ribosyl)acetamidine + ATP = 5-amino-1-(5-phospho-beta-D-ribosyl)imidazole + ADP + phosphate + H(+)</text>
        <dbReference type="Rhea" id="RHEA:23032"/>
        <dbReference type="ChEBI" id="CHEBI:15378"/>
        <dbReference type="ChEBI" id="CHEBI:30616"/>
        <dbReference type="ChEBI" id="CHEBI:43474"/>
        <dbReference type="ChEBI" id="CHEBI:137981"/>
        <dbReference type="ChEBI" id="CHEBI:147287"/>
        <dbReference type="ChEBI" id="CHEBI:456216"/>
        <dbReference type="EC" id="6.3.3.1"/>
    </reaction>
</comment>
<comment type="pathway">
    <text evidence="1">Purine metabolism; IMP biosynthesis via de novo pathway; 5-amino-1-(5-phospho-D-ribosyl)imidazole from N(2)-formyl-N(1)-(5-phospho-D-ribosyl)glycinamide: step 2/2.</text>
</comment>
<comment type="subcellular location">
    <subcellularLocation>
        <location evidence="1">Cytoplasm</location>
    </subcellularLocation>
</comment>
<comment type="similarity">
    <text evidence="1">Belongs to the AIR synthase family.</text>
</comment>